<accession>B4M9F7</accession>
<dbReference type="EMBL" id="CH940654">
    <property type="protein sequence ID" value="EDW57833.1"/>
    <property type="molecule type" value="Genomic_DNA"/>
</dbReference>
<dbReference type="SMR" id="B4M9F7"/>
<dbReference type="FunCoup" id="B4M9F7">
    <property type="interactions" value="1244"/>
</dbReference>
<dbReference type="STRING" id="7244.B4M9F7"/>
<dbReference type="EnsemblMetazoa" id="FBtr0233846">
    <property type="protein sequence ID" value="FBpp0232338"/>
    <property type="gene ID" value="FBgn0205089"/>
</dbReference>
<dbReference type="EnsemblMetazoa" id="XM_002057724.3">
    <property type="protein sequence ID" value="XP_002057760.1"/>
    <property type="gene ID" value="LOC6633957"/>
</dbReference>
<dbReference type="GeneID" id="6633957"/>
<dbReference type="KEGG" id="dvi:6633957"/>
<dbReference type="eggNOG" id="KOG2185">
    <property type="taxonomic scope" value="Eukaryota"/>
</dbReference>
<dbReference type="HOGENOM" id="CLU_040504_1_0_1"/>
<dbReference type="InParanoid" id="B4M9F7"/>
<dbReference type="OMA" id="QYTRGIG"/>
<dbReference type="OrthoDB" id="5842926at2759"/>
<dbReference type="PhylomeDB" id="B4M9F7"/>
<dbReference type="Proteomes" id="UP000008792">
    <property type="component" value="Unassembled WGS sequence"/>
</dbReference>
<dbReference type="GO" id="GO:0005634">
    <property type="term" value="C:nucleus"/>
    <property type="evidence" value="ECO:0007669"/>
    <property type="project" value="UniProtKB-SubCell"/>
</dbReference>
<dbReference type="GO" id="GO:0001227">
    <property type="term" value="F:DNA-binding transcription repressor activity, RNA polymerase II-specific"/>
    <property type="evidence" value="ECO:0007669"/>
    <property type="project" value="TreeGrafter"/>
</dbReference>
<dbReference type="GO" id="GO:0000978">
    <property type="term" value="F:RNA polymerase II cis-regulatory region sequence-specific DNA binding"/>
    <property type="evidence" value="ECO:0007669"/>
    <property type="project" value="TreeGrafter"/>
</dbReference>
<dbReference type="GO" id="GO:0008270">
    <property type="term" value="F:zinc ion binding"/>
    <property type="evidence" value="ECO:0007669"/>
    <property type="project" value="UniProtKB-KW"/>
</dbReference>
<dbReference type="CDD" id="cd20384">
    <property type="entry name" value="Tudor_ZGPAT"/>
    <property type="match status" value="1"/>
</dbReference>
<dbReference type="Gene3D" id="2.30.30.1190">
    <property type="match status" value="1"/>
</dbReference>
<dbReference type="InterPro" id="IPR000467">
    <property type="entry name" value="G_patch_dom"/>
</dbReference>
<dbReference type="InterPro" id="IPR000571">
    <property type="entry name" value="Znf_CCCH"/>
</dbReference>
<dbReference type="PANTHER" id="PTHR46297">
    <property type="entry name" value="ZINC FINGER CCCH-TYPE WITH G PATCH DOMAIN-CONTAINING PROTEIN"/>
    <property type="match status" value="1"/>
</dbReference>
<dbReference type="PANTHER" id="PTHR46297:SF1">
    <property type="entry name" value="ZINC FINGER CCCH-TYPE WITH G PATCH DOMAIN-CONTAINING PROTEIN"/>
    <property type="match status" value="1"/>
</dbReference>
<dbReference type="Pfam" id="PF01585">
    <property type="entry name" value="G-patch"/>
    <property type="match status" value="1"/>
</dbReference>
<dbReference type="SMART" id="SM00443">
    <property type="entry name" value="G_patch"/>
    <property type="match status" value="1"/>
</dbReference>
<dbReference type="PROSITE" id="PS50174">
    <property type="entry name" value="G_PATCH"/>
    <property type="match status" value="1"/>
</dbReference>
<dbReference type="PROSITE" id="PS50103">
    <property type="entry name" value="ZF_C3H1"/>
    <property type="match status" value="1"/>
</dbReference>
<evidence type="ECO:0000250" key="1"/>
<evidence type="ECO:0000255" key="2">
    <source>
        <dbReference type="PROSITE-ProRule" id="PRU00092"/>
    </source>
</evidence>
<evidence type="ECO:0000255" key="3">
    <source>
        <dbReference type="PROSITE-ProRule" id="PRU00723"/>
    </source>
</evidence>
<evidence type="ECO:0000256" key="4">
    <source>
        <dbReference type="SAM" id="MobiDB-lite"/>
    </source>
</evidence>
<name>ZGPAT_DROVI</name>
<gene>
    <name type="ORF">GJ17921</name>
</gene>
<sequence>MDEYEAQLLVVEQALLVTTDAQQREELIALRANLEELLALTRSSETEDINETNTQQATDIDDELKRFQNELSSLEGEQTDSQDDQQRLEELRTKYNALLGEKCSAPHEHSWGALSYHNALICGVDDELILDKNGILDVRLRVLFTNPTHREMLPCNYYLEGECRFDETRCRYSHGALVPGAAIKDYNAPDFCRLARNCPVLAKLQDRLWHRGRVLCVNFMEQQCRVRLDGQEHKERERDFPFEELFPLIVEEDDELSSDSEETNETDGSDAANESDMDDVEAARQARMVELSLFTFKPNERLGAWEQYTRGIGSKLMASMGYIHGTGLGSDGRGIVTPVSAQILPQGRSLDACMELREAANGDKDYFSIERKLKRAQRRQQAANEKAYERESKRTDVFAFLNGSVLGQGSQRAENSTKTTKIDNLQQHTNKSLNVETVRIADDIRRKQRDIAKTQQSLARNAIDSQLQKRLSSQLQSQKQELATLQAQESSLSKEQQTRKSKNKMFEF</sequence>
<reference key="1">
    <citation type="journal article" date="2007" name="Nature">
        <title>Evolution of genes and genomes on the Drosophila phylogeny.</title>
        <authorList>
            <consortium name="Drosophila 12 genomes consortium"/>
        </authorList>
    </citation>
    <scope>NUCLEOTIDE SEQUENCE [LARGE SCALE GENOMIC DNA]</scope>
    <source>
        <strain>Tucson 15010-1051.87</strain>
    </source>
</reference>
<proteinExistence type="inferred from homology"/>
<organism>
    <name type="scientific">Drosophila virilis</name>
    <name type="common">Fruit fly</name>
    <dbReference type="NCBI Taxonomy" id="7244"/>
    <lineage>
        <taxon>Eukaryota</taxon>
        <taxon>Metazoa</taxon>
        <taxon>Ecdysozoa</taxon>
        <taxon>Arthropoda</taxon>
        <taxon>Hexapoda</taxon>
        <taxon>Insecta</taxon>
        <taxon>Pterygota</taxon>
        <taxon>Neoptera</taxon>
        <taxon>Endopterygota</taxon>
        <taxon>Diptera</taxon>
        <taxon>Brachycera</taxon>
        <taxon>Muscomorpha</taxon>
        <taxon>Ephydroidea</taxon>
        <taxon>Drosophilidae</taxon>
        <taxon>Drosophila</taxon>
    </lineage>
</organism>
<feature type="chain" id="PRO_0000385209" description="Zinc finger CCCH-type with G patch domain-containing protein">
    <location>
        <begin position="1"/>
        <end position="508"/>
    </location>
</feature>
<feature type="domain" description="G-patch" evidence="2">
    <location>
        <begin position="309"/>
        <end position="355"/>
    </location>
</feature>
<feature type="zinc finger region" description="C3H1-type" evidence="3">
    <location>
        <begin position="154"/>
        <end position="177"/>
    </location>
</feature>
<feature type="region of interest" description="Disordered" evidence="4">
    <location>
        <begin position="253"/>
        <end position="279"/>
    </location>
</feature>
<feature type="region of interest" description="Disordered" evidence="4">
    <location>
        <begin position="486"/>
        <end position="508"/>
    </location>
</feature>
<feature type="compositionally biased region" description="Polar residues" evidence="4">
    <location>
        <begin position="486"/>
        <end position="495"/>
    </location>
</feature>
<feature type="compositionally biased region" description="Basic residues" evidence="4">
    <location>
        <begin position="499"/>
        <end position="508"/>
    </location>
</feature>
<keyword id="KW-0238">DNA-binding</keyword>
<keyword id="KW-0479">Metal-binding</keyword>
<keyword id="KW-0539">Nucleus</keyword>
<keyword id="KW-1185">Reference proteome</keyword>
<keyword id="KW-0678">Repressor</keyword>
<keyword id="KW-0804">Transcription</keyword>
<keyword id="KW-0805">Transcription regulation</keyword>
<keyword id="KW-0862">Zinc</keyword>
<keyword id="KW-0863">Zinc-finger</keyword>
<comment type="function">
    <text evidence="1">Transcription repressor.</text>
</comment>
<comment type="subcellular location">
    <subcellularLocation>
        <location evidence="1">Nucleus</location>
    </subcellularLocation>
</comment>
<protein>
    <recommendedName>
        <fullName>Zinc finger CCCH-type with G patch domain-containing protein</fullName>
    </recommendedName>
</protein>